<organism>
    <name type="scientific">Drimys granadensis</name>
    <dbReference type="NCBI Taxonomy" id="224735"/>
    <lineage>
        <taxon>Eukaryota</taxon>
        <taxon>Viridiplantae</taxon>
        <taxon>Streptophyta</taxon>
        <taxon>Embryophyta</taxon>
        <taxon>Tracheophyta</taxon>
        <taxon>Spermatophyta</taxon>
        <taxon>Magnoliopsida</taxon>
        <taxon>Magnoliidae</taxon>
        <taxon>Canellales</taxon>
        <taxon>Winteraceae</taxon>
        <taxon>Drimys</taxon>
    </lineage>
</organism>
<sequence>MPRSRINGNFIDKTSSIVANILLRIIPTTSGEKEAFTYYRDGMSAQSEGNYAEALQNYYEAMRLEIDPYDRSYILYNIGLIHTSNGEHTKALEYYFRALERNPFLPQAFNNMAVICHYRGEQAIRQGDSEIAEAWSDQAAEYWKQAIALTPGNYIEAHNWLKITRRFE</sequence>
<proteinExistence type="inferred from homology"/>
<name>YCF3_DRIGR</name>
<protein>
    <recommendedName>
        <fullName evidence="1">Photosystem I assembly protein Ycf3</fullName>
    </recommendedName>
</protein>
<keyword id="KW-0150">Chloroplast</keyword>
<keyword id="KW-0472">Membrane</keyword>
<keyword id="KW-0602">Photosynthesis</keyword>
<keyword id="KW-0934">Plastid</keyword>
<keyword id="KW-0677">Repeat</keyword>
<keyword id="KW-0793">Thylakoid</keyword>
<keyword id="KW-0802">TPR repeat</keyword>
<reference key="1">
    <citation type="journal article" date="2006" name="BMC Evol. Biol.">
        <title>Complete plastid genome sequences of Drimys, Liriodendron, and Piper: implications for the phylogenetic relationships of magnoliids.</title>
        <authorList>
            <person name="Cai Z."/>
            <person name="Penaflor C."/>
            <person name="Kuehl J.V."/>
            <person name="Leebens-Mack J."/>
            <person name="Carlson J.E."/>
            <person name="dePamphilis C.W."/>
            <person name="Boore J.L."/>
            <person name="Jansen R.K."/>
        </authorList>
    </citation>
    <scope>NUCLEOTIDE SEQUENCE [LARGE SCALE GENOMIC DNA]</scope>
</reference>
<feature type="chain" id="PRO_0000275616" description="Photosystem I assembly protein Ycf3">
    <location>
        <begin position="1"/>
        <end position="168"/>
    </location>
</feature>
<feature type="repeat" description="TPR 1">
    <location>
        <begin position="35"/>
        <end position="68"/>
    </location>
</feature>
<feature type="repeat" description="TPR 2">
    <location>
        <begin position="72"/>
        <end position="105"/>
    </location>
</feature>
<feature type="repeat" description="TPR 3">
    <location>
        <begin position="120"/>
        <end position="153"/>
    </location>
</feature>
<comment type="function">
    <text evidence="1">Essential for the assembly of the photosystem I (PSI) complex. May act as a chaperone-like factor to guide the assembly of the PSI subunits.</text>
</comment>
<comment type="subcellular location">
    <subcellularLocation>
        <location evidence="1">Plastid</location>
        <location evidence="1">Chloroplast thylakoid membrane</location>
        <topology evidence="1">Peripheral membrane protein</topology>
    </subcellularLocation>
</comment>
<comment type="similarity">
    <text evidence="1">Belongs to the Ycf3 family.</text>
</comment>
<dbReference type="EMBL" id="DQ887676">
    <property type="protein sequence ID" value="ABH88298.1"/>
    <property type="molecule type" value="Genomic_DNA"/>
</dbReference>
<dbReference type="RefSeq" id="YP_784387.1">
    <property type="nucleotide sequence ID" value="NC_008456.1"/>
</dbReference>
<dbReference type="SMR" id="Q06GZ6"/>
<dbReference type="GeneID" id="4363551"/>
<dbReference type="GO" id="GO:0009535">
    <property type="term" value="C:chloroplast thylakoid membrane"/>
    <property type="evidence" value="ECO:0007669"/>
    <property type="project" value="UniProtKB-SubCell"/>
</dbReference>
<dbReference type="GO" id="GO:0015979">
    <property type="term" value="P:photosynthesis"/>
    <property type="evidence" value="ECO:0007669"/>
    <property type="project" value="UniProtKB-UniRule"/>
</dbReference>
<dbReference type="FunFam" id="1.25.40.10:FF:000004">
    <property type="entry name" value="Photosystem I assembly protein Ycf3"/>
    <property type="match status" value="1"/>
</dbReference>
<dbReference type="Gene3D" id="1.25.40.10">
    <property type="entry name" value="Tetratricopeptide repeat domain"/>
    <property type="match status" value="1"/>
</dbReference>
<dbReference type="HAMAP" id="MF_00439">
    <property type="entry name" value="Ycf3"/>
    <property type="match status" value="1"/>
</dbReference>
<dbReference type="InterPro" id="IPR022818">
    <property type="entry name" value="PSI_Ycf3_assembly"/>
</dbReference>
<dbReference type="InterPro" id="IPR011990">
    <property type="entry name" value="TPR-like_helical_dom_sf"/>
</dbReference>
<dbReference type="InterPro" id="IPR019734">
    <property type="entry name" value="TPR_rpt"/>
</dbReference>
<dbReference type="InterPro" id="IPR051685">
    <property type="entry name" value="Ycf3/AcsC/BcsC/TPR_MFPF"/>
</dbReference>
<dbReference type="NCBIfam" id="NF002725">
    <property type="entry name" value="PRK02603.1"/>
    <property type="match status" value="1"/>
</dbReference>
<dbReference type="PANTHER" id="PTHR44943">
    <property type="entry name" value="CELLULOSE SYNTHASE OPERON PROTEIN C"/>
    <property type="match status" value="1"/>
</dbReference>
<dbReference type="PANTHER" id="PTHR44943:SF8">
    <property type="entry name" value="TPR REPEAT-CONTAINING PROTEIN MJ0263"/>
    <property type="match status" value="1"/>
</dbReference>
<dbReference type="Pfam" id="PF00515">
    <property type="entry name" value="TPR_1"/>
    <property type="match status" value="1"/>
</dbReference>
<dbReference type="SMART" id="SM00028">
    <property type="entry name" value="TPR"/>
    <property type="match status" value="3"/>
</dbReference>
<dbReference type="SUPFAM" id="SSF48452">
    <property type="entry name" value="TPR-like"/>
    <property type="match status" value="1"/>
</dbReference>
<dbReference type="PROSITE" id="PS50005">
    <property type="entry name" value="TPR"/>
    <property type="match status" value="3"/>
</dbReference>
<dbReference type="PROSITE" id="PS50293">
    <property type="entry name" value="TPR_REGION"/>
    <property type="match status" value="1"/>
</dbReference>
<gene>
    <name evidence="1" type="primary">ycf3</name>
</gene>
<accession>Q06GZ6</accession>
<evidence type="ECO:0000255" key="1">
    <source>
        <dbReference type="HAMAP-Rule" id="MF_00439"/>
    </source>
</evidence>
<geneLocation type="chloroplast"/>